<sequence length="62" mass="7099">MSIFESICKLRKINTKNQSNSIISKSQMNEILFEGNKKSNNGRIEVVTWGRGNVDYGSVYRD</sequence>
<proteinExistence type="predicted"/>
<accession>Q54EK4</accession>
<keyword id="KW-1185">Reference proteome</keyword>
<feature type="chain" id="PRO_0000346884" description="Putative uncharacterized protein DDB_G0291628">
    <location>
        <begin position="1"/>
        <end position="62"/>
    </location>
</feature>
<dbReference type="EMBL" id="AAFI02000177">
    <property type="protein sequence ID" value="EAL61798.1"/>
    <property type="molecule type" value="Genomic_DNA"/>
</dbReference>
<dbReference type="RefSeq" id="XP_635236.1">
    <property type="nucleotide sequence ID" value="XM_630144.1"/>
</dbReference>
<dbReference type="PaxDb" id="44689-DDB0215448"/>
<dbReference type="EnsemblProtists" id="EAL61798">
    <property type="protein sequence ID" value="EAL61798"/>
    <property type="gene ID" value="DDB_G0291628"/>
</dbReference>
<dbReference type="GeneID" id="8628182"/>
<dbReference type="KEGG" id="ddi:DDB_G0291628"/>
<dbReference type="dictyBase" id="DDB_G0291628"/>
<dbReference type="VEuPathDB" id="AmoebaDB:DDB_G0291628"/>
<dbReference type="HOGENOM" id="CLU_2908780_0_0_1"/>
<dbReference type="InParanoid" id="Q54EK4"/>
<dbReference type="PRO" id="PR:Q54EK4"/>
<dbReference type="Proteomes" id="UP000002195">
    <property type="component" value="Chromosome 6"/>
</dbReference>
<gene>
    <name type="ORF">DDB_G0291628</name>
</gene>
<reference key="1">
    <citation type="journal article" date="2005" name="Nature">
        <title>The genome of the social amoeba Dictyostelium discoideum.</title>
        <authorList>
            <person name="Eichinger L."/>
            <person name="Pachebat J.A."/>
            <person name="Gloeckner G."/>
            <person name="Rajandream M.A."/>
            <person name="Sucgang R."/>
            <person name="Berriman M."/>
            <person name="Song J."/>
            <person name="Olsen R."/>
            <person name="Szafranski K."/>
            <person name="Xu Q."/>
            <person name="Tunggal B."/>
            <person name="Kummerfeld S."/>
            <person name="Madera M."/>
            <person name="Konfortov B.A."/>
            <person name="Rivero F."/>
            <person name="Bankier A.T."/>
            <person name="Lehmann R."/>
            <person name="Hamlin N."/>
            <person name="Davies R."/>
            <person name="Gaudet P."/>
            <person name="Fey P."/>
            <person name="Pilcher K."/>
            <person name="Chen G."/>
            <person name="Saunders D."/>
            <person name="Sodergren E.J."/>
            <person name="Davis P."/>
            <person name="Kerhornou A."/>
            <person name="Nie X."/>
            <person name="Hall N."/>
            <person name="Anjard C."/>
            <person name="Hemphill L."/>
            <person name="Bason N."/>
            <person name="Farbrother P."/>
            <person name="Desany B."/>
            <person name="Just E."/>
            <person name="Morio T."/>
            <person name="Rost R."/>
            <person name="Churcher C.M."/>
            <person name="Cooper J."/>
            <person name="Haydock S."/>
            <person name="van Driessche N."/>
            <person name="Cronin A."/>
            <person name="Goodhead I."/>
            <person name="Muzny D.M."/>
            <person name="Mourier T."/>
            <person name="Pain A."/>
            <person name="Lu M."/>
            <person name="Harper D."/>
            <person name="Lindsay R."/>
            <person name="Hauser H."/>
            <person name="James K.D."/>
            <person name="Quiles M."/>
            <person name="Madan Babu M."/>
            <person name="Saito T."/>
            <person name="Buchrieser C."/>
            <person name="Wardroper A."/>
            <person name="Felder M."/>
            <person name="Thangavelu M."/>
            <person name="Johnson D."/>
            <person name="Knights A."/>
            <person name="Loulseged H."/>
            <person name="Mungall K.L."/>
            <person name="Oliver K."/>
            <person name="Price C."/>
            <person name="Quail M.A."/>
            <person name="Urushihara H."/>
            <person name="Hernandez J."/>
            <person name="Rabbinowitsch E."/>
            <person name="Steffen D."/>
            <person name="Sanders M."/>
            <person name="Ma J."/>
            <person name="Kohara Y."/>
            <person name="Sharp S."/>
            <person name="Simmonds M.N."/>
            <person name="Spiegler S."/>
            <person name="Tivey A."/>
            <person name="Sugano S."/>
            <person name="White B."/>
            <person name="Walker D."/>
            <person name="Woodward J.R."/>
            <person name="Winckler T."/>
            <person name="Tanaka Y."/>
            <person name="Shaulsky G."/>
            <person name="Schleicher M."/>
            <person name="Weinstock G.M."/>
            <person name="Rosenthal A."/>
            <person name="Cox E.C."/>
            <person name="Chisholm R.L."/>
            <person name="Gibbs R.A."/>
            <person name="Loomis W.F."/>
            <person name="Platzer M."/>
            <person name="Kay R.R."/>
            <person name="Williams J.G."/>
            <person name="Dear P.H."/>
            <person name="Noegel A.A."/>
            <person name="Barrell B.G."/>
            <person name="Kuspa A."/>
        </authorList>
    </citation>
    <scope>NUCLEOTIDE SEQUENCE [LARGE SCALE GENOMIC DNA]</scope>
    <source>
        <strain>AX4</strain>
    </source>
</reference>
<name>Y5448_DICDI</name>
<organism>
    <name type="scientific">Dictyostelium discoideum</name>
    <name type="common">Social amoeba</name>
    <dbReference type="NCBI Taxonomy" id="44689"/>
    <lineage>
        <taxon>Eukaryota</taxon>
        <taxon>Amoebozoa</taxon>
        <taxon>Evosea</taxon>
        <taxon>Eumycetozoa</taxon>
        <taxon>Dictyostelia</taxon>
        <taxon>Dictyosteliales</taxon>
        <taxon>Dictyosteliaceae</taxon>
        <taxon>Dictyostelium</taxon>
    </lineage>
</organism>
<protein>
    <recommendedName>
        <fullName>Putative uncharacterized protein DDB_G0291628</fullName>
    </recommendedName>
</protein>